<accession>A5UT23</accession>
<gene>
    <name evidence="1" type="primary">rlmN</name>
    <name type="ordered locus">RoseRS_1376</name>
</gene>
<name>RLMN_ROSS1</name>
<evidence type="ECO:0000255" key="1">
    <source>
        <dbReference type="HAMAP-Rule" id="MF_01849"/>
    </source>
</evidence>
<evidence type="ECO:0000255" key="2">
    <source>
        <dbReference type="PROSITE-ProRule" id="PRU01266"/>
    </source>
</evidence>
<protein>
    <recommendedName>
        <fullName evidence="1">Probable dual-specificity RNA methyltransferase RlmN</fullName>
        <ecNumber evidence="1">2.1.1.192</ecNumber>
    </recommendedName>
    <alternativeName>
        <fullName evidence="1">23S rRNA (adenine(2503)-C(2))-methyltransferase</fullName>
    </alternativeName>
    <alternativeName>
        <fullName evidence="1">23S rRNA m2A2503 methyltransferase</fullName>
    </alternativeName>
    <alternativeName>
        <fullName evidence="1">Ribosomal RNA large subunit methyltransferase N</fullName>
    </alternativeName>
    <alternativeName>
        <fullName evidence="1">tRNA (adenine(37)-C(2))-methyltransferase</fullName>
    </alternativeName>
    <alternativeName>
        <fullName evidence="1">tRNA m2A37 methyltransferase</fullName>
    </alternativeName>
</protein>
<reference key="1">
    <citation type="submission" date="2007-04" db="EMBL/GenBank/DDBJ databases">
        <title>Complete sequence of Roseiflexus sp. RS-1.</title>
        <authorList>
            <consortium name="US DOE Joint Genome Institute"/>
            <person name="Copeland A."/>
            <person name="Lucas S."/>
            <person name="Lapidus A."/>
            <person name="Barry K."/>
            <person name="Detter J.C."/>
            <person name="Glavina del Rio T."/>
            <person name="Hammon N."/>
            <person name="Israni S."/>
            <person name="Dalin E."/>
            <person name="Tice H."/>
            <person name="Pitluck S."/>
            <person name="Chertkov O."/>
            <person name="Brettin T."/>
            <person name="Bruce D."/>
            <person name="Han C."/>
            <person name="Schmutz J."/>
            <person name="Larimer F."/>
            <person name="Land M."/>
            <person name="Hauser L."/>
            <person name="Kyrpides N."/>
            <person name="Mikhailova N."/>
            <person name="Bryant D.A."/>
            <person name="Richardson P."/>
        </authorList>
    </citation>
    <scope>NUCLEOTIDE SEQUENCE [LARGE SCALE GENOMIC DNA]</scope>
    <source>
        <strain>RS-1</strain>
    </source>
</reference>
<proteinExistence type="inferred from homology"/>
<comment type="function">
    <text evidence="1">Specifically methylates position 2 of adenine 2503 in 23S rRNA and position 2 of adenine 37 in tRNAs.</text>
</comment>
<comment type="catalytic activity">
    <reaction evidence="1">
        <text>adenosine(2503) in 23S rRNA + 2 reduced [2Fe-2S]-[ferredoxin] + 2 S-adenosyl-L-methionine = 2-methyladenosine(2503) in 23S rRNA + 5'-deoxyadenosine + L-methionine + 2 oxidized [2Fe-2S]-[ferredoxin] + S-adenosyl-L-homocysteine</text>
        <dbReference type="Rhea" id="RHEA:42916"/>
        <dbReference type="Rhea" id="RHEA-COMP:10000"/>
        <dbReference type="Rhea" id="RHEA-COMP:10001"/>
        <dbReference type="Rhea" id="RHEA-COMP:10152"/>
        <dbReference type="Rhea" id="RHEA-COMP:10282"/>
        <dbReference type="ChEBI" id="CHEBI:17319"/>
        <dbReference type="ChEBI" id="CHEBI:33737"/>
        <dbReference type="ChEBI" id="CHEBI:33738"/>
        <dbReference type="ChEBI" id="CHEBI:57844"/>
        <dbReference type="ChEBI" id="CHEBI:57856"/>
        <dbReference type="ChEBI" id="CHEBI:59789"/>
        <dbReference type="ChEBI" id="CHEBI:74411"/>
        <dbReference type="ChEBI" id="CHEBI:74497"/>
        <dbReference type="EC" id="2.1.1.192"/>
    </reaction>
</comment>
<comment type="catalytic activity">
    <reaction evidence="1">
        <text>adenosine(37) in tRNA + 2 reduced [2Fe-2S]-[ferredoxin] + 2 S-adenosyl-L-methionine = 2-methyladenosine(37) in tRNA + 5'-deoxyadenosine + L-methionine + 2 oxidized [2Fe-2S]-[ferredoxin] + S-adenosyl-L-homocysteine</text>
        <dbReference type="Rhea" id="RHEA:43332"/>
        <dbReference type="Rhea" id="RHEA-COMP:10000"/>
        <dbReference type="Rhea" id="RHEA-COMP:10001"/>
        <dbReference type="Rhea" id="RHEA-COMP:10162"/>
        <dbReference type="Rhea" id="RHEA-COMP:10485"/>
        <dbReference type="ChEBI" id="CHEBI:17319"/>
        <dbReference type="ChEBI" id="CHEBI:33737"/>
        <dbReference type="ChEBI" id="CHEBI:33738"/>
        <dbReference type="ChEBI" id="CHEBI:57844"/>
        <dbReference type="ChEBI" id="CHEBI:57856"/>
        <dbReference type="ChEBI" id="CHEBI:59789"/>
        <dbReference type="ChEBI" id="CHEBI:74411"/>
        <dbReference type="ChEBI" id="CHEBI:74497"/>
        <dbReference type="EC" id="2.1.1.192"/>
    </reaction>
</comment>
<comment type="cofactor">
    <cofactor evidence="1">
        <name>[4Fe-4S] cluster</name>
        <dbReference type="ChEBI" id="CHEBI:49883"/>
    </cofactor>
    <text evidence="1">Binds 1 [4Fe-4S] cluster. The cluster is coordinated with 3 cysteines and an exchangeable S-adenosyl-L-methionine.</text>
</comment>
<comment type="subcellular location">
    <subcellularLocation>
        <location evidence="1">Cytoplasm</location>
    </subcellularLocation>
</comment>
<comment type="miscellaneous">
    <text evidence="1">Reaction proceeds by a ping-pong mechanism involving intermediate methylation of a conserved cysteine residue.</text>
</comment>
<comment type="similarity">
    <text evidence="1">Belongs to the radical SAM superfamily. RlmN family.</text>
</comment>
<feature type="chain" id="PRO_0000350376" description="Probable dual-specificity RNA methyltransferase RlmN">
    <location>
        <begin position="1"/>
        <end position="399"/>
    </location>
</feature>
<feature type="domain" description="Radical SAM core" evidence="2">
    <location>
        <begin position="103"/>
        <end position="381"/>
    </location>
</feature>
<feature type="active site" description="Proton acceptor" evidence="1">
    <location>
        <position position="97"/>
    </location>
</feature>
<feature type="active site" description="S-methylcysteine intermediate" evidence="1">
    <location>
        <position position="386"/>
    </location>
</feature>
<feature type="binding site" evidence="1">
    <location>
        <position position="117"/>
    </location>
    <ligand>
        <name>[4Fe-4S] cluster</name>
        <dbReference type="ChEBI" id="CHEBI:49883"/>
        <note>4Fe-4S-S-AdoMet</note>
    </ligand>
</feature>
<feature type="binding site" evidence="1">
    <location>
        <position position="121"/>
    </location>
    <ligand>
        <name>[4Fe-4S] cluster</name>
        <dbReference type="ChEBI" id="CHEBI:49883"/>
        <note>4Fe-4S-S-AdoMet</note>
    </ligand>
</feature>
<feature type="binding site" evidence="1">
    <location>
        <position position="124"/>
    </location>
    <ligand>
        <name>[4Fe-4S] cluster</name>
        <dbReference type="ChEBI" id="CHEBI:49883"/>
        <note>4Fe-4S-S-AdoMet</note>
    </ligand>
</feature>
<feature type="binding site" evidence="1">
    <location>
        <begin position="203"/>
        <end position="204"/>
    </location>
    <ligand>
        <name>S-adenosyl-L-methionine</name>
        <dbReference type="ChEBI" id="CHEBI:59789"/>
    </ligand>
</feature>
<feature type="binding site" evidence="1">
    <location>
        <position position="235"/>
    </location>
    <ligand>
        <name>S-adenosyl-L-methionine</name>
        <dbReference type="ChEBI" id="CHEBI:59789"/>
    </ligand>
</feature>
<feature type="binding site" evidence="1">
    <location>
        <begin position="258"/>
        <end position="260"/>
    </location>
    <ligand>
        <name>S-adenosyl-L-methionine</name>
        <dbReference type="ChEBI" id="CHEBI:59789"/>
    </ligand>
</feature>
<feature type="binding site" evidence="1">
    <location>
        <position position="343"/>
    </location>
    <ligand>
        <name>S-adenosyl-L-methionine</name>
        <dbReference type="ChEBI" id="CHEBI:59789"/>
    </ligand>
</feature>
<feature type="disulfide bond" description="(transient)" evidence="1">
    <location>
        <begin position="110"/>
        <end position="386"/>
    </location>
</feature>
<sequence length="399" mass="43977">MMNQDTLPNLYDLSLAEMERLMTAWGQPAYRARQIFRQLYVNLVDSPLAMTDLPLALRERLVAETRLAPLAPEQVHVADQGLTRKALFRLENGVLIESVLMIYPDRATVCVSTQAGCGMGCVFCATGTLGLLRNLSPGDIVAQVVWAAREMRRFAAERCISPSLAPPDDDSWWTPDTLEDQGSSEARSISVSRLSNIVFMGMGEPFANYDRWWRAVEILHDPRGLNMGARSMTVSTVGLIPGIRRLATETLPINLAISLHAPDDALRSALMPVNRRYPLAALLEATRDYLAATGRRVSFEYVLLQGKNDEPEHAAKLAALLHGEAGTTPLPLHLVHVNLIPWNPVPGMPLGRSERRRVLTFQRILRERGIACTVRVERGVSIAAACGQLAGARGLNVEC</sequence>
<keyword id="KW-0004">4Fe-4S</keyword>
<keyword id="KW-0963">Cytoplasm</keyword>
<keyword id="KW-1015">Disulfide bond</keyword>
<keyword id="KW-0408">Iron</keyword>
<keyword id="KW-0411">Iron-sulfur</keyword>
<keyword id="KW-0479">Metal-binding</keyword>
<keyword id="KW-0489">Methyltransferase</keyword>
<keyword id="KW-0698">rRNA processing</keyword>
<keyword id="KW-0949">S-adenosyl-L-methionine</keyword>
<keyword id="KW-0808">Transferase</keyword>
<keyword id="KW-0819">tRNA processing</keyword>
<organism>
    <name type="scientific">Roseiflexus sp. (strain RS-1)</name>
    <dbReference type="NCBI Taxonomy" id="357808"/>
    <lineage>
        <taxon>Bacteria</taxon>
        <taxon>Bacillati</taxon>
        <taxon>Chloroflexota</taxon>
        <taxon>Chloroflexia</taxon>
        <taxon>Chloroflexales</taxon>
        <taxon>Roseiflexineae</taxon>
        <taxon>Roseiflexaceae</taxon>
        <taxon>Roseiflexus</taxon>
    </lineage>
</organism>
<dbReference type="EC" id="2.1.1.192" evidence="1"/>
<dbReference type="EMBL" id="CP000686">
    <property type="protein sequence ID" value="ABQ89776.1"/>
    <property type="molecule type" value="Genomic_DNA"/>
</dbReference>
<dbReference type="RefSeq" id="WP_011956128.1">
    <property type="nucleotide sequence ID" value="NC_009523.1"/>
</dbReference>
<dbReference type="SMR" id="A5UT23"/>
<dbReference type="STRING" id="357808.RoseRS_1376"/>
<dbReference type="KEGG" id="rrs:RoseRS_1376"/>
<dbReference type="eggNOG" id="COG0820">
    <property type="taxonomic scope" value="Bacteria"/>
</dbReference>
<dbReference type="HOGENOM" id="CLU_029101_0_2_0"/>
<dbReference type="OrthoDB" id="9793973at2"/>
<dbReference type="Proteomes" id="UP000006554">
    <property type="component" value="Chromosome"/>
</dbReference>
<dbReference type="GO" id="GO:0005737">
    <property type="term" value="C:cytoplasm"/>
    <property type="evidence" value="ECO:0007669"/>
    <property type="project" value="UniProtKB-SubCell"/>
</dbReference>
<dbReference type="GO" id="GO:0051539">
    <property type="term" value="F:4 iron, 4 sulfur cluster binding"/>
    <property type="evidence" value="ECO:0007669"/>
    <property type="project" value="UniProtKB-UniRule"/>
</dbReference>
<dbReference type="GO" id="GO:0046872">
    <property type="term" value="F:metal ion binding"/>
    <property type="evidence" value="ECO:0007669"/>
    <property type="project" value="UniProtKB-KW"/>
</dbReference>
<dbReference type="GO" id="GO:0070040">
    <property type="term" value="F:rRNA (adenine(2503)-C2-)-methyltransferase activity"/>
    <property type="evidence" value="ECO:0007669"/>
    <property type="project" value="UniProtKB-UniRule"/>
</dbReference>
<dbReference type="GO" id="GO:0019843">
    <property type="term" value="F:rRNA binding"/>
    <property type="evidence" value="ECO:0007669"/>
    <property type="project" value="UniProtKB-UniRule"/>
</dbReference>
<dbReference type="GO" id="GO:0002935">
    <property type="term" value="F:tRNA (adenine(37)-C2)-methyltransferase activity"/>
    <property type="evidence" value="ECO:0007669"/>
    <property type="project" value="UniProtKB-UniRule"/>
</dbReference>
<dbReference type="GO" id="GO:0000049">
    <property type="term" value="F:tRNA binding"/>
    <property type="evidence" value="ECO:0007669"/>
    <property type="project" value="UniProtKB-UniRule"/>
</dbReference>
<dbReference type="GO" id="GO:0070475">
    <property type="term" value="P:rRNA base methylation"/>
    <property type="evidence" value="ECO:0007669"/>
    <property type="project" value="UniProtKB-UniRule"/>
</dbReference>
<dbReference type="GO" id="GO:0030488">
    <property type="term" value="P:tRNA methylation"/>
    <property type="evidence" value="ECO:0007669"/>
    <property type="project" value="UniProtKB-UniRule"/>
</dbReference>
<dbReference type="Gene3D" id="1.10.150.530">
    <property type="match status" value="1"/>
</dbReference>
<dbReference type="Gene3D" id="3.20.20.70">
    <property type="entry name" value="Aldolase class I"/>
    <property type="match status" value="1"/>
</dbReference>
<dbReference type="HAMAP" id="MF_01849">
    <property type="entry name" value="RNA_methyltr_RlmN"/>
    <property type="match status" value="1"/>
</dbReference>
<dbReference type="InterPro" id="IPR013785">
    <property type="entry name" value="Aldolase_TIM"/>
</dbReference>
<dbReference type="InterPro" id="IPR040072">
    <property type="entry name" value="Methyltransferase_A"/>
</dbReference>
<dbReference type="InterPro" id="IPR048641">
    <property type="entry name" value="RlmN_N"/>
</dbReference>
<dbReference type="InterPro" id="IPR027492">
    <property type="entry name" value="RNA_MTrfase_RlmN"/>
</dbReference>
<dbReference type="InterPro" id="IPR004383">
    <property type="entry name" value="rRNA_lsu_MTrfase_RlmN/Cfr"/>
</dbReference>
<dbReference type="InterPro" id="IPR007197">
    <property type="entry name" value="rSAM"/>
</dbReference>
<dbReference type="NCBIfam" id="NF011031">
    <property type="entry name" value="PRK14461.1"/>
    <property type="match status" value="1"/>
</dbReference>
<dbReference type="PANTHER" id="PTHR30544">
    <property type="entry name" value="23S RRNA METHYLTRANSFERASE"/>
    <property type="match status" value="1"/>
</dbReference>
<dbReference type="PANTHER" id="PTHR30544:SF5">
    <property type="entry name" value="RADICAL SAM CORE DOMAIN-CONTAINING PROTEIN"/>
    <property type="match status" value="1"/>
</dbReference>
<dbReference type="Pfam" id="PF04055">
    <property type="entry name" value="Radical_SAM"/>
    <property type="match status" value="1"/>
</dbReference>
<dbReference type="Pfam" id="PF21016">
    <property type="entry name" value="RlmN_N"/>
    <property type="match status" value="1"/>
</dbReference>
<dbReference type="PIRSF" id="PIRSF006004">
    <property type="entry name" value="CHP00048"/>
    <property type="match status" value="1"/>
</dbReference>
<dbReference type="SFLD" id="SFLDF00275">
    <property type="entry name" value="adenosine_C2_methyltransferase"/>
    <property type="match status" value="1"/>
</dbReference>
<dbReference type="SFLD" id="SFLDS00029">
    <property type="entry name" value="Radical_SAM"/>
    <property type="match status" value="1"/>
</dbReference>
<dbReference type="SUPFAM" id="SSF102114">
    <property type="entry name" value="Radical SAM enzymes"/>
    <property type="match status" value="1"/>
</dbReference>
<dbReference type="PROSITE" id="PS51918">
    <property type="entry name" value="RADICAL_SAM"/>
    <property type="match status" value="1"/>
</dbReference>